<accession>P0AFE4</accession>
<accession>P33606</accession>
<accession>P76487</accession>
<accession>P78182</accession>
<sequence>MIPLQHGLILAAILFVLGLTGLVIRRNLLFMLIGLEIMINASALAFVVAGSYWGQTDGQVMYILAISLAAAEASIGLALLLQLHRRRQNLNIDSVSEMRG</sequence>
<evidence type="ECO:0000255" key="1"/>
<evidence type="ECO:0000255" key="2">
    <source>
        <dbReference type="HAMAP-Rule" id="MF_01456"/>
    </source>
</evidence>
<evidence type="ECO:0000269" key="3">
    <source>
    </source>
</evidence>
<evidence type="ECO:0000305" key="4"/>
<evidence type="ECO:0007829" key="5">
    <source>
        <dbReference type="PDB" id="7Z7V"/>
    </source>
</evidence>
<organism>
    <name type="scientific">Escherichia coli (strain K12)</name>
    <dbReference type="NCBI Taxonomy" id="83333"/>
    <lineage>
        <taxon>Bacteria</taxon>
        <taxon>Pseudomonadati</taxon>
        <taxon>Pseudomonadota</taxon>
        <taxon>Gammaproteobacteria</taxon>
        <taxon>Enterobacterales</taxon>
        <taxon>Enterobacteriaceae</taxon>
        <taxon>Escherichia</taxon>
    </lineage>
</organism>
<dbReference type="EC" id="7.1.1.-" evidence="2"/>
<dbReference type="EMBL" id="X68301">
    <property type="protein sequence ID" value="CAA48370.1"/>
    <property type="molecule type" value="Genomic_DNA"/>
</dbReference>
<dbReference type="EMBL" id="U00096">
    <property type="protein sequence ID" value="AAC75339.1"/>
    <property type="molecule type" value="Genomic_DNA"/>
</dbReference>
<dbReference type="EMBL" id="AP009048">
    <property type="protein sequence ID" value="BAA16107.2"/>
    <property type="molecule type" value="Genomic_DNA"/>
</dbReference>
<dbReference type="PIR" id="E64999">
    <property type="entry name" value="E64999"/>
</dbReference>
<dbReference type="PIR" id="S38320">
    <property type="entry name" value="S37068"/>
</dbReference>
<dbReference type="RefSeq" id="NP_416782.1">
    <property type="nucleotide sequence ID" value="NC_000913.3"/>
</dbReference>
<dbReference type="RefSeq" id="WP_000612644.1">
    <property type="nucleotide sequence ID" value="NZ_STEB01000008.1"/>
</dbReference>
<dbReference type="PDB" id="7NYH">
    <property type="method" value="EM"/>
    <property type="resolution" value="3.60 A"/>
    <property type="chains" value="K=1-100"/>
</dbReference>
<dbReference type="PDB" id="7NYR">
    <property type="method" value="EM"/>
    <property type="resolution" value="3.30 A"/>
    <property type="chains" value="K=1-100"/>
</dbReference>
<dbReference type="PDB" id="7NYU">
    <property type="method" value="EM"/>
    <property type="resolution" value="3.80 A"/>
    <property type="chains" value="K=1-100"/>
</dbReference>
<dbReference type="PDB" id="7NYV">
    <property type="method" value="EM"/>
    <property type="resolution" value="3.70 A"/>
    <property type="chains" value="K=1-100"/>
</dbReference>
<dbReference type="PDB" id="7P61">
    <property type="method" value="EM"/>
    <property type="resolution" value="3.20 A"/>
    <property type="chains" value="K=1-100"/>
</dbReference>
<dbReference type="PDB" id="7P62">
    <property type="method" value="EM"/>
    <property type="resolution" value="3.60 A"/>
    <property type="chains" value="K=1-100"/>
</dbReference>
<dbReference type="PDB" id="7P63">
    <property type="method" value="EM"/>
    <property type="resolution" value="3.40 A"/>
    <property type="chains" value="K=1-100"/>
</dbReference>
<dbReference type="PDB" id="7P64">
    <property type="method" value="EM"/>
    <property type="resolution" value="2.50 A"/>
    <property type="chains" value="K=1-100"/>
</dbReference>
<dbReference type="PDB" id="7P69">
    <property type="method" value="EM"/>
    <property type="resolution" value="3.00 A"/>
    <property type="chains" value="K=1-100"/>
</dbReference>
<dbReference type="PDB" id="7P7C">
    <property type="method" value="EM"/>
    <property type="resolution" value="2.40 A"/>
    <property type="chains" value="K=1-100"/>
</dbReference>
<dbReference type="PDB" id="7P7E">
    <property type="method" value="EM"/>
    <property type="resolution" value="2.70 A"/>
    <property type="chains" value="K=1-100"/>
</dbReference>
<dbReference type="PDB" id="7P7J">
    <property type="method" value="EM"/>
    <property type="resolution" value="2.70 A"/>
    <property type="chains" value="K=1-100"/>
</dbReference>
<dbReference type="PDB" id="7P7K">
    <property type="method" value="EM"/>
    <property type="resolution" value="3.10 A"/>
    <property type="chains" value="K=1-100"/>
</dbReference>
<dbReference type="PDB" id="7P7L">
    <property type="method" value="EM"/>
    <property type="resolution" value="3.00 A"/>
    <property type="chains" value="K=1-100"/>
</dbReference>
<dbReference type="PDB" id="7P7M">
    <property type="method" value="EM"/>
    <property type="resolution" value="3.20 A"/>
    <property type="chains" value="K=1-100"/>
</dbReference>
<dbReference type="PDB" id="7Z7R">
    <property type="method" value="EM"/>
    <property type="resolution" value="3.36 A"/>
    <property type="chains" value="K=1-100"/>
</dbReference>
<dbReference type="PDB" id="7Z7S">
    <property type="method" value="EM"/>
    <property type="resolution" value="2.40 A"/>
    <property type="chains" value="K=1-100"/>
</dbReference>
<dbReference type="PDB" id="7Z7T">
    <property type="method" value="EM"/>
    <property type="resolution" value="3.10 A"/>
    <property type="chains" value="K=1-100"/>
</dbReference>
<dbReference type="PDB" id="7Z7V">
    <property type="method" value="EM"/>
    <property type="resolution" value="2.29 A"/>
    <property type="chains" value="K=1-100"/>
</dbReference>
<dbReference type="PDB" id="7Z80">
    <property type="method" value="EM"/>
    <property type="resolution" value="2.93 A"/>
    <property type="chains" value="K=1-100"/>
</dbReference>
<dbReference type="PDB" id="7Z83">
    <property type="method" value="EM"/>
    <property type="resolution" value="2.88 A"/>
    <property type="chains" value="K=1-100"/>
</dbReference>
<dbReference type="PDB" id="7Z84">
    <property type="method" value="EM"/>
    <property type="resolution" value="2.87 A"/>
    <property type="chains" value="K=1-100"/>
</dbReference>
<dbReference type="PDB" id="7ZC5">
    <property type="method" value="EM"/>
    <property type="resolution" value="3.00 A"/>
    <property type="chains" value="K=1-100"/>
</dbReference>
<dbReference type="PDB" id="7ZCI">
    <property type="method" value="EM"/>
    <property type="resolution" value="2.69 A"/>
    <property type="chains" value="K=1-100"/>
</dbReference>
<dbReference type="PDBsum" id="7NYH"/>
<dbReference type="PDBsum" id="7NYR"/>
<dbReference type="PDBsum" id="7NYU"/>
<dbReference type="PDBsum" id="7NYV"/>
<dbReference type="PDBsum" id="7P61"/>
<dbReference type="PDBsum" id="7P62"/>
<dbReference type="PDBsum" id="7P63"/>
<dbReference type="PDBsum" id="7P64"/>
<dbReference type="PDBsum" id="7P69"/>
<dbReference type="PDBsum" id="7P7C"/>
<dbReference type="PDBsum" id="7P7E"/>
<dbReference type="PDBsum" id="7P7J"/>
<dbReference type="PDBsum" id="7P7K"/>
<dbReference type="PDBsum" id="7P7L"/>
<dbReference type="PDBsum" id="7P7M"/>
<dbReference type="PDBsum" id="7Z7R"/>
<dbReference type="PDBsum" id="7Z7S"/>
<dbReference type="PDBsum" id="7Z7T"/>
<dbReference type="PDBsum" id="7Z7V"/>
<dbReference type="PDBsum" id="7Z80"/>
<dbReference type="PDBsum" id="7Z83"/>
<dbReference type="PDBsum" id="7Z84"/>
<dbReference type="PDBsum" id="7ZC5"/>
<dbReference type="PDBsum" id="7ZCI"/>
<dbReference type="EMDB" id="EMD-12653"/>
<dbReference type="EMDB" id="EMD-12654"/>
<dbReference type="EMDB" id="EMD-12655"/>
<dbReference type="SMR" id="P0AFE4"/>
<dbReference type="BioGRID" id="4260508">
    <property type="interactions" value="70"/>
</dbReference>
<dbReference type="ComplexPortal" id="CPX-243">
    <property type="entry name" value="Respiratory chain complex I"/>
</dbReference>
<dbReference type="DIP" id="DIP-51165N"/>
<dbReference type="FunCoup" id="P0AFE4">
    <property type="interactions" value="349"/>
</dbReference>
<dbReference type="IntAct" id="P0AFE4">
    <property type="interactions" value="2"/>
</dbReference>
<dbReference type="STRING" id="511145.b2279"/>
<dbReference type="TCDB" id="3.D.1.1.1">
    <property type="family name" value="the h+ or na+-translocating nadh dehydrogenase (ndh) family"/>
</dbReference>
<dbReference type="jPOST" id="P0AFE4"/>
<dbReference type="PaxDb" id="511145-b2279"/>
<dbReference type="EnsemblBacteria" id="AAC75339">
    <property type="protein sequence ID" value="AAC75339"/>
    <property type="gene ID" value="b2279"/>
</dbReference>
<dbReference type="GeneID" id="93033872"/>
<dbReference type="GeneID" id="947580"/>
<dbReference type="KEGG" id="ecj:JW2274"/>
<dbReference type="KEGG" id="eco:b2279"/>
<dbReference type="KEGG" id="ecoc:C3026_12720"/>
<dbReference type="PATRIC" id="fig|1411691.4.peg.4457"/>
<dbReference type="EchoBASE" id="EB2015"/>
<dbReference type="eggNOG" id="COG0713">
    <property type="taxonomic scope" value="Bacteria"/>
</dbReference>
<dbReference type="HOGENOM" id="CLU_144724_0_1_6"/>
<dbReference type="InParanoid" id="P0AFE4"/>
<dbReference type="OMA" id="IPMEHGL"/>
<dbReference type="OrthoDB" id="9801357at2"/>
<dbReference type="PhylomeDB" id="P0AFE4"/>
<dbReference type="BioCyc" id="EcoCyc:NUOK-MONOMER"/>
<dbReference type="BioCyc" id="MetaCyc:NUOK-MONOMER"/>
<dbReference type="PRO" id="PR:P0AFE4"/>
<dbReference type="Proteomes" id="UP000000625">
    <property type="component" value="Chromosome"/>
</dbReference>
<dbReference type="GO" id="GO:0016020">
    <property type="term" value="C:membrane"/>
    <property type="evidence" value="ECO:0000314"/>
    <property type="project" value="ComplexPortal"/>
</dbReference>
<dbReference type="GO" id="GO:0030964">
    <property type="term" value="C:NADH dehydrogenase complex"/>
    <property type="evidence" value="ECO:0000314"/>
    <property type="project" value="EcoliWiki"/>
</dbReference>
<dbReference type="GO" id="GO:0005886">
    <property type="term" value="C:plasma membrane"/>
    <property type="evidence" value="ECO:0000314"/>
    <property type="project" value="EcoCyc"/>
</dbReference>
<dbReference type="GO" id="GO:0045271">
    <property type="term" value="C:respiratory chain complex I"/>
    <property type="evidence" value="ECO:0000314"/>
    <property type="project" value="EcoCyc"/>
</dbReference>
<dbReference type="GO" id="GO:0008137">
    <property type="term" value="F:NADH dehydrogenase (ubiquinone) activity"/>
    <property type="evidence" value="ECO:0000315"/>
    <property type="project" value="EcoCyc"/>
</dbReference>
<dbReference type="GO" id="GO:0050136">
    <property type="term" value="F:NADH:ubiquinone reductase (non-electrogenic) activity"/>
    <property type="evidence" value="ECO:0007669"/>
    <property type="project" value="UniProtKB-UniRule"/>
</dbReference>
<dbReference type="GO" id="GO:0048038">
    <property type="term" value="F:quinone binding"/>
    <property type="evidence" value="ECO:0007669"/>
    <property type="project" value="UniProtKB-KW"/>
</dbReference>
<dbReference type="GO" id="GO:0042773">
    <property type="term" value="P:ATP synthesis coupled electron transport"/>
    <property type="evidence" value="ECO:0007669"/>
    <property type="project" value="InterPro"/>
</dbReference>
<dbReference type="GO" id="GO:0022904">
    <property type="term" value="P:respiratory electron transport chain"/>
    <property type="evidence" value="ECO:0000314"/>
    <property type="project" value="ComplexPortal"/>
</dbReference>
<dbReference type="FunFam" id="1.10.287.3510:FF:000001">
    <property type="entry name" value="NADH-quinone oxidoreductase subunit K"/>
    <property type="match status" value="1"/>
</dbReference>
<dbReference type="Gene3D" id="1.10.287.3510">
    <property type="match status" value="1"/>
</dbReference>
<dbReference type="HAMAP" id="MF_01456">
    <property type="entry name" value="NDH1_NuoK"/>
    <property type="match status" value="1"/>
</dbReference>
<dbReference type="InterPro" id="IPR001133">
    <property type="entry name" value="NADH_UbQ_OxRdtase_chain4L/K"/>
</dbReference>
<dbReference type="InterPro" id="IPR039428">
    <property type="entry name" value="NUOK/Mnh_C1-like"/>
</dbReference>
<dbReference type="NCBIfam" id="NF004319">
    <property type="entry name" value="PRK05715.1-1"/>
    <property type="match status" value="1"/>
</dbReference>
<dbReference type="NCBIfam" id="NF004320">
    <property type="entry name" value="PRK05715.1-2"/>
    <property type="match status" value="1"/>
</dbReference>
<dbReference type="PANTHER" id="PTHR11434:SF16">
    <property type="entry name" value="NADH-UBIQUINONE OXIDOREDUCTASE CHAIN 4L"/>
    <property type="match status" value="1"/>
</dbReference>
<dbReference type="PANTHER" id="PTHR11434">
    <property type="entry name" value="NADH-UBIQUINONE OXIDOREDUCTASE SUBUNIT ND4L"/>
    <property type="match status" value="1"/>
</dbReference>
<dbReference type="Pfam" id="PF00420">
    <property type="entry name" value="Oxidored_q2"/>
    <property type="match status" value="1"/>
</dbReference>
<keyword id="KW-0002">3D-structure</keyword>
<keyword id="KW-0997">Cell inner membrane</keyword>
<keyword id="KW-1003">Cell membrane</keyword>
<keyword id="KW-0472">Membrane</keyword>
<keyword id="KW-0520">NAD</keyword>
<keyword id="KW-0874">Quinone</keyword>
<keyword id="KW-1185">Reference proteome</keyword>
<keyword id="KW-1278">Translocase</keyword>
<keyword id="KW-0812">Transmembrane</keyword>
<keyword id="KW-1133">Transmembrane helix</keyword>
<keyword id="KW-0813">Transport</keyword>
<keyword id="KW-0830">Ubiquinone</keyword>
<protein>
    <recommendedName>
        <fullName evidence="2">NADH-quinone oxidoreductase subunit K</fullName>
        <ecNumber evidence="2">7.1.1.-</ecNumber>
    </recommendedName>
    <alternativeName>
        <fullName evidence="2">NADH dehydrogenase I subunit K</fullName>
    </alternativeName>
    <alternativeName>
        <fullName evidence="2">NDH-1 subunit K</fullName>
    </alternativeName>
    <alternativeName>
        <fullName>NUO11</fullName>
    </alternativeName>
</protein>
<gene>
    <name evidence="2" type="primary">nuoK</name>
    <name type="ordered locus">b2279</name>
    <name type="ordered locus">JW2274</name>
</gene>
<name>NUOK_ECOLI</name>
<feature type="chain" id="PRO_0000118524" description="NADH-quinone oxidoreductase subunit K">
    <location>
        <begin position="1"/>
        <end position="100"/>
    </location>
</feature>
<feature type="topological domain" description="Periplasmic" evidence="1">
    <location>
        <begin position="1"/>
        <end position="3"/>
    </location>
</feature>
<feature type="transmembrane region" description="Helical" evidence="2">
    <location>
        <begin position="4"/>
        <end position="24"/>
    </location>
</feature>
<feature type="topological domain" description="Cytoplasmic" evidence="1">
    <location>
        <begin position="25"/>
        <end position="27"/>
    </location>
</feature>
<feature type="transmembrane region" description="Helical" evidence="2">
    <location>
        <begin position="28"/>
        <end position="48"/>
    </location>
</feature>
<feature type="topological domain" description="Periplasmic" evidence="1">
    <location>
        <begin position="49"/>
        <end position="59"/>
    </location>
</feature>
<feature type="transmembrane region" description="Helical" evidence="2">
    <location>
        <begin position="60"/>
        <end position="80"/>
    </location>
</feature>
<feature type="topological domain" description="Cytoplasmic" evidence="1">
    <location>
        <begin position="81"/>
        <end position="100"/>
    </location>
</feature>
<feature type="mutagenesis site" description="Retains 14% dNADH oxidase and dNADH-DB reductase activity." evidence="3">
    <original>RR</original>
    <variation>AA</variation>
    <location>
        <begin position="25"/>
        <end position="26"/>
    </location>
</feature>
<feature type="mutagenesis site" description="Retains 2% dNADH oxidase and dNADH-DB reductase activity." evidence="3">
    <original>E</original>
    <variation>A</variation>
    <location>
        <position position="36"/>
    </location>
</feature>
<feature type="mutagenesis site" description="Retains 2% dNADH oxidase and dNADH-DB reductase activity, neither a membrane potential nor a proton gradient can be formed by isolated membranes." evidence="3">
    <original>E</original>
    <variation>Q</variation>
    <location>
        <position position="36"/>
    </location>
</feature>
<feature type="mutagenesis site" description="Retains 43% dNADH oxidase and dNADH-DB reductase activity." evidence="3">
    <original>E</original>
    <variation>A</variation>
    <location>
        <position position="72"/>
    </location>
</feature>
<feature type="mutagenesis site" description="Retains 22% dNADH oxidase and dNADH-DB reductase activity." evidence="3">
    <original>E</original>
    <variation>Q</variation>
    <location>
        <position position="72"/>
    </location>
</feature>
<feature type="sequence conflict" description="In Ref. 1; CAA48370." evidence="4" ref="1">
    <original>NA</original>
    <variation>RP</variation>
    <location>
        <begin position="40"/>
        <end position="41"/>
    </location>
</feature>
<feature type="sequence conflict" description="In Ref. 1; CAA48370." evidence="4" ref="1">
    <original>FVVAGSYWGQTDGQ</original>
    <variation>LRGRRKLLGPRPTVK</variation>
    <location>
        <begin position="46"/>
        <end position="59"/>
    </location>
</feature>
<feature type="sequence conflict" description="In Ref. 1; CAA48370." evidence="4" ref="1">
    <original>S</original>
    <variation>T</variation>
    <location>
        <position position="67"/>
    </location>
</feature>
<feature type="helix" evidence="5">
    <location>
        <begin position="4"/>
        <end position="24"/>
    </location>
</feature>
<feature type="helix" evidence="5">
    <location>
        <begin position="28"/>
        <end position="53"/>
    </location>
</feature>
<feature type="helix" evidence="5">
    <location>
        <begin position="57"/>
        <end position="87"/>
    </location>
</feature>
<feature type="helix" evidence="5">
    <location>
        <begin position="92"/>
        <end position="94"/>
    </location>
</feature>
<reference key="1">
    <citation type="journal article" date="1993" name="J. Mol. Biol.">
        <title>The gene locus of the proton-translocating NADH: ubiquinone oxidoreductase in Escherichia coli. Organization of the 14 genes and relationship between the derived proteins and subunits of mitochondrial complex I.</title>
        <authorList>
            <person name="Weidner U."/>
            <person name="Geier S."/>
            <person name="Ptock A."/>
            <person name="Friedrich T."/>
            <person name="Leif H."/>
            <person name="Weiss H."/>
        </authorList>
    </citation>
    <scope>NUCLEOTIDE SEQUENCE [GENOMIC DNA]</scope>
    <source>
        <strain>K12 / AN387</strain>
    </source>
</reference>
<reference key="2">
    <citation type="journal article" date="1997" name="DNA Res.">
        <title>Construction of a contiguous 874-kb sequence of the Escherichia coli-K12 genome corresponding to 50.0-68.8 min on the linkage map and analysis of its sequence features.</title>
        <authorList>
            <person name="Yamamoto Y."/>
            <person name="Aiba H."/>
            <person name="Baba T."/>
            <person name="Hayashi K."/>
            <person name="Inada T."/>
            <person name="Isono K."/>
            <person name="Itoh T."/>
            <person name="Kimura S."/>
            <person name="Kitagawa M."/>
            <person name="Makino K."/>
            <person name="Miki T."/>
            <person name="Mitsuhashi N."/>
            <person name="Mizobuchi K."/>
            <person name="Mori H."/>
            <person name="Nakade S."/>
            <person name="Nakamura Y."/>
            <person name="Nashimoto H."/>
            <person name="Oshima T."/>
            <person name="Oyama S."/>
            <person name="Saito N."/>
            <person name="Sampei G."/>
            <person name="Satoh Y."/>
            <person name="Sivasundaram S."/>
            <person name="Tagami H."/>
            <person name="Takahashi H."/>
            <person name="Takeda J."/>
            <person name="Takemoto K."/>
            <person name="Uehara K."/>
            <person name="Wada C."/>
            <person name="Yamagata S."/>
            <person name="Horiuchi T."/>
        </authorList>
    </citation>
    <scope>NUCLEOTIDE SEQUENCE [LARGE SCALE GENOMIC DNA]</scope>
    <source>
        <strain>K12 / W3110 / ATCC 27325 / DSM 5911</strain>
    </source>
</reference>
<reference key="3">
    <citation type="journal article" date="1997" name="Science">
        <title>The complete genome sequence of Escherichia coli K-12.</title>
        <authorList>
            <person name="Blattner F.R."/>
            <person name="Plunkett G. III"/>
            <person name="Bloch C.A."/>
            <person name="Perna N.T."/>
            <person name="Burland V."/>
            <person name="Riley M."/>
            <person name="Collado-Vides J."/>
            <person name="Glasner J.D."/>
            <person name="Rode C.K."/>
            <person name="Mayhew G.F."/>
            <person name="Gregor J."/>
            <person name="Davis N.W."/>
            <person name="Kirkpatrick H.A."/>
            <person name="Goeden M.A."/>
            <person name="Rose D.J."/>
            <person name="Mau B."/>
            <person name="Shao Y."/>
        </authorList>
    </citation>
    <scope>NUCLEOTIDE SEQUENCE [LARGE SCALE GENOMIC DNA]</scope>
    <source>
        <strain>K12 / MG1655 / ATCC 47076</strain>
    </source>
</reference>
<reference key="4">
    <citation type="journal article" date="2006" name="Mol. Syst. Biol.">
        <title>Highly accurate genome sequences of Escherichia coli K-12 strains MG1655 and W3110.</title>
        <authorList>
            <person name="Hayashi K."/>
            <person name="Morooka N."/>
            <person name="Yamamoto Y."/>
            <person name="Fujita K."/>
            <person name="Isono K."/>
            <person name="Choi S."/>
            <person name="Ohtsubo E."/>
            <person name="Baba T."/>
            <person name="Wanner B.L."/>
            <person name="Mori H."/>
            <person name="Horiuchi T."/>
        </authorList>
    </citation>
    <scope>NUCLEOTIDE SEQUENCE [LARGE SCALE GENOMIC DNA]</scope>
    <source>
        <strain>K12 / W3110 / ATCC 27325 / DSM 5911</strain>
    </source>
</reference>
<reference key="5">
    <citation type="journal article" date="2005" name="Biochemistry">
        <title>Characterization of the membrane domain subunit NuoK (ND4L) of the NADH-quinone oxidoreductase from Escherichia coli.</title>
        <authorList>
            <person name="Kao M.-C."/>
            <person name="Nakamaru-Ogiso E."/>
            <person name="Matsuno-Yagi A."/>
            <person name="Yagi T."/>
        </authorList>
    </citation>
    <scope>MUTAGENESIS OF 25-ARG-ARG-26; GLU-36 AND GLU-72</scope>
    <source>
        <strain>K12 / MC4100 / ATCC 35695 / DSM 6574</strain>
    </source>
</reference>
<reference key="6">
    <citation type="journal article" date="2005" name="Science">
        <title>Global topology analysis of the Escherichia coli inner membrane proteome.</title>
        <authorList>
            <person name="Daley D.O."/>
            <person name="Rapp M."/>
            <person name="Granseth E."/>
            <person name="Melen K."/>
            <person name="Drew D."/>
            <person name="von Heijne G."/>
        </authorList>
    </citation>
    <scope>TOPOLOGY [LARGE SCALE ANALYSIS]</scope>
    <source>
        <strain>K12 / MG1655 / ATCC 47076</strain>
    </source>
</reference>
<comment type="function">
    <text>NDH-1 shuttles electrons from NADH, via FMN and iron-sulfur (Fe-S) centers, to quinones in the respiratory chain. The immediate electron acceptor for the enzyme in this species is believed to be ubiquinone. Couples the redox reaction to proton translocation (for every two electrons transferred, four hydrogen ions are translocated across the cytoplasmic membrane), and thus conserves the redox energy in a proton gradient.</text>
</comment>
<comment type="function">
    <text>There are 2 NADH dehydrogenases in E.coli, however only this complex is able to use dNADH (reduced nicotinamide hypoxanthine dinucleotide, deamino-NADH) and dNADH-DB (dimethoxy-5-methyl-6-decyl-1,4-benzoquinone) as substrates.</text>
</comment>
<comment type="catalytic activity">
    <reaction evidence="2">
        <text>a quinone + NADH + 5 H(+)(in) = a quinol + NAD(+) + 4 H(+)(out)</text>
        <dbReference type="Rhea" id="RHEA:57888"/>
        <dbReference type="ChEBI" id="CHEBI:15378"/>
        <dbReference type="ChEBI" id="CHEBI:24646"/>
        <dbReference type="ChEBI" id="CHEBI:57540"/>
        <dbReference type="ChEBI" id="CHEBI:57945"/>
        <dbReference type="ChEBI" id="CHEBI:132124"/>
    </reaction>
</comment>
<comment type="subunit">
    <text>NDH-1 is composed of 13 different subunits. Subunits NuoA, H, J, K, L, M, N constitute the membrane sector of the complex.</text>
</comment>
<comment type="subcellular location">
    <subcellularLocation>
        <location>Cell inner membrane</location>
        <topology>Multi-pass membrane protein</topology>
    </subcellularLocation>
</comment>
<comment type="similarity">
    <text evidence="2">Belongs to the complex I subunit 4L family.</text>
</comment>
<proteinExistence type="evidence at protein level"/>